<reference key="1">
    <citation type="journal article" date="2011" name="Nat. Biotechnol.">
        <title>Genome sequencing and comparison of two nonhuman primate animal models, the cynomolgus and Chinese rhesus macaques.</title>
        <authorList>
            <person name="Yan G."/>
            <person name="Zhang G."/>
            <person name="Fang X."/>
            <person name="Zhang Y."/>
            <person name="Li C."/>
            <person name="Ling F."/>
            <person name="Cooper D.N."/>
            <person name="Li Q."/>
            <person name="Li Y."/>
            <person name="van Gool A.J."/>
            <person name="Du H."/>
            <person name="Chen J."/>
            <person name="Chen R."/>
            <person name="Zhang P."/>
            <person name="Huang Z."/>
            <person name="Thompson J.R."/>
            <person name="Meng Y."/>
            <person name="Bai Y."/>
            <person name="Wang J."/>
            <person name="Zhuo M."/>
            <person name="Wang T."/>
            <person name="Huang Y."/>
            <person name="Wei L."/>
            <person name="Li J."/>
            <person name="Wang Z."/>
            <person name="Hu H."/>
            <person name="Yang P."/>
            <person name="Le L."/>
            <person name="Stenson P.D."/>
            <person name="Li B."/>
            <person name="Liu X."/>
            <person name="Ball E.V."/>
            <person name="An N."/>
            <person name="Huang Q."/>
            <person name="Zhang Y."/>
            <person name="Fan W."/>
            <person name="Zhang X."/>
            <person name="Li Y."/>
            <person name="Wang W."/>
            <person name="Katze M.G."/>
            <person name="Su B."/>
            <person name="Nielsen R."/>
            <person name="Yang H."/>
            <person name="Wang J."/>
            <person name="Wang X."/>
            <person name="Wang J."/>
        </authorList>
    </citation>
    <scope>NUCLEOTIDE SEQUENCE [LARGE SCALE GENOMIC DNA]</scope>
</reference>
<feature type="signal peptide" evidence="6">
    <location>
        <begin position="1"/>
        <end position="18"/>
    </location>
</feature>
<feature type="chain" id="PRO_0000432007" description="Proapolipoprotein A-I">
    <location>
        <begin position="19"/>
        <end position="267"/>
    </location>
</feature>
<feature type="chain" id="PRO_0000432008" description="Apolipoprotein A-I">
    <location>
        <begin position="25"/>
        <end position="267"/>
    </location>
</feature>
<feature type="chain" id="PRO_0000432009" description="Truncated apolipoprotein A-I" evidence="3">
    <location>
        <begin position="25"/>
        <end position="266"/>
    </location>
</feature>
<feature type="repeat" description="1">
    <location>
        <begin position="68"/>
        <end position="89"/>
    </location>
</feature>
<feature type="repeat" description="2">
    <location>
        <begin position="90"/>
        <end position="111"/>
    </location>
</feature>
<feature type="repeat" description="3; half-length">
    <location>
        <begin position="112"/>
        <end position="122"/>
    </location>
</feature>
<feature type="repeat" description="4">
    <location>
        <begin position="123"/>
        <end position="144"/>
    </location>
</feature>
<feature type="repeat" description="5">
    <location>
        <begin position="145"/>
        <end position="166"/>
    </location>
</feature>
<feature type="repeat" description="6">
    <location>
        <begin position="167"/>
        <end position="188"/>
    </location>
</feature>
<feature type="repeat" description="7">
    <location>
        <begin position="189"/>
        <end position="210"/>
    </location>
</feature>
<feature type="repeat" description="8">
    <location>
        <begin position="211"/>
        <end position="232"/>
    </location>
</feature>
<feature type="repeat" description="9; half-length">
    <location>
        <begin position="233"/>
        <end position="243"/>
    </location>
</feature>
<feature type="repeat" description="10">
    <location>
        <begin position="244"/>
        <end position="267"/>
    </location>
</feature>
<feature type="region of interest" description="10 X approximate tandem repeats">
    <location>
        <begin position="68"/>
        <end position="267"/>
    </location>
</feature>
<feature type="modified residue" description="Methionine sulfoxide" evidence="3">
    <location>
        <position position="110"/>
    </location>
</feature>
<feature type="modified residue" description="Methionine sulfoxide" evidence="3">
    <location>
        <position position="136"/>
    </location>
</feature>
<dbReference type="EMBL" id="CM001266">
    <property type="protein sequence ID" value="EHH23455.1"/>
    <property type="molecule type" value="Genomic_DNA"/>
</dbReference>
<dbReference type="RefSeq" id="XP_001090774.1">
    <property type="nucleotide sequence ID" value="XM_001090774.3"/>
</dbReference>
<dbReference type="RefSeq" id="XP_014971256.1">
    <property type="nucleotide sequence ID" value="XM_015115770.1"/>
</dbReference>
<dbReference type="RefSeq" id="XP_028689839.1">
    <property type="nucleotide sequence ID" value="XM_028834006.1"/>
</dbReference>
<dbReference type="SMR" id="F7FQM7"/>
<dbReference type="FunCoup" id="F7FQM7">
    <property type="interactions" value="138"/>
</dbReference>
<dbReference type="STRING" id="9544.ENSMMUP00000021209"/>
<dbReference type="Ensembl" id="ENSMMUT00000022671.3">
    <property type="protein sequence ID" value="ENSMMUP00000021209.1"/>
    <property type="gene ID" value="ENSMMUG00000044545.2"/>
</dbReference>
<dbReference type="GeneID" id="696969"/>
<dbReference type="VEuPathDB" id="HostDB:ENSMMUG00000044545"/>
<dbReference type="VGNC" id="VGNC:99545">
    <property type="gene designation" value="APOA1"/>
</dbReference>
<dbReference type="GeneTree" id="ENSGT00950000182929"/>
<dbReference type="HOGENOM" id="CLU_058447_1_0_1"/>
<dbReference type="InParanoid" id="F7FQM7"/>
<dbReference type="OMA" id="EYVAQFE"/>
<dbReference type="OrthoDB" id="8727817at2759"/>
<dbReference type="Proteomes" id="UP000006718">
    <property type="component" value="Chromosome 14"/>
</dbReference>
<dbReference type="Proteomes" id="UP000013456">
    <property type="component" value="Chromosome 14"/>
</dbReference>
<dbReference type="Bgee" id="ENSMMUG00000044545">
    <property type="expression patterns" value="Expressed in liver and 20 other cell types or tissues"/>
</dbReference>
<dbReference type="ExpressionAtlas" id="F7FQM7">
    <property type="expression patterns" value="baseline"/>
</dbReference>
<dbReference type="GO" id="GO:0042627">
    <property type="term" value="C:chylomicron"/>
    <property type="evidence" value="ECO:0000318"/>
    <property type="project" value="GO_Central"/>
</dbReference>
<dbReference type="GO" id="GO:0030139">
    <property type="term" value="C:endocytic vesicle"/>
    <property type="evidence" value="ECO:0007669"/>
    <property type="project" value="Ensembl"/>
</dbReference>
<dbReference type="GO" id="GO:1903561">
    <property type="term" value="C:extracellular vesicle"/>
    <property type="evidence" value="ECO:0000318"/>
    <property type="project" value="GO_Central"/>
</dbReference>
<dbReference type="GO" id="GO:0034364">
    <property type="term" value="C:high-density lipoprotein particle"/>
    <property type="evidence" value="ECO:0000318"/>
    <property type="project" value="GO_Central"/>
</dbReference>
<dbReference type="GO" id="GO:0034362">
    <property type="term" value="C:low-density lipoprotein particle"/>
    <property type="evidence" value="ECO:0000318"/>
    <property type="project" value="GO_Central"/>
</dbReference>
<dbReference type="GO" id="GO:0034366">
    <property type="term" value="C:spherical high-density lipoprotein particle"/>
    <property type="evidence" value="ECO:0007669"/>
    <property type="project" value="Ensembl"/>
</dbReference>
<dbReference type="GO" id="GO:0034361">
    <property type="term" value="C:very-low-density lipoprotein particle"/>
    <property type="evidence" value="ECO:0000318"/>
    <property type="project" value="GO_Central"/>
</dbReference>
<dbReference type="GO" id="GO:0001540">
    <property type="term" value="F:amyloid-beta binding"/>
    <property type="evidence" value="ECO:0007669"/>
    <property type="project" value="Ensembl"/>
</dbReference>
<dbReference type="GO" id="GO:0034191">
    <property type="term" value="F:apolipoprotein A-I receptor binding"/>
    <property type="evidence" value="ECO:0007669"/>
    <property type="project" value="Ensembl"/>
</dbReference>
<dbReference type="GO" id="GO:0045499">
    <property type="term" value="F:chemorepellent activity"/>
    <property type="evidence" value="ECO:0007669"/>
    <property type="project" value="Ensembl"/>
</dbReference>
<dbReference type="GO" id="GO:0015485">
    <property type="term" value="F:cholesterol binding"/>
    <property type="evidence" value="ECO:0007669"/>
    <property type="project" value="Ensembl"/>
</dbReference>
<dbReference type="GO" id="GO:0120020">
    <property type="term" value="F:cholesterol transfer activity"/>
    <property type="evidence" value="ECO:0000318"/>
    <property type="project" value="GO_Central"/>
</dbReference>
<dbReference type="GO" id="GO:0019899">
    <property type="term" value="F:enzyme binding"/>
    <property type="evidence" value="ECO:0007669"/>
    <property type="project" value="Ensembl"/>
</dbReference>
<dbReference type="GO" id="GO:0031072">
    <property type="term" value="F:heat shock protein binding"/>
    <property type="evidence" value="ECO:0007669"/>
    <property type="project" value="Ensembl"/>
</dbReference>
<dbReference type="GO" id="GO:0008035">
    <property type="term" value="F:high-density lipoprotein particle binding"/>
    <property type="evidence" value="ECO:0007669"/>
    <property type="project" value="Ensembl"/>
</dbReference>
<dbReference type="GO" id="GO:0070653">
    <property type="term" value="F:high-density lipoprotein particle receptor binding"/>
    <property type="evidence" value="ECO:0007669"/>
    <property type="project" value="Ensembl"/>
</dbReference>
<dbReference type="GO" id="GO:0060228">
    <property type="term" value="F:phosphatidylcholine-sterol O-acyltransferase activator activity"/>
    <property type="evidence" value="ECO:0000318"/>
    <property type="project" value="GO_Central"/>
</dbReference>
<dbReference type="GO" id="GO:0005543">
    <property type="term" value="F:phospholipid binding"/>
    <property type="evidence" value="ECO:0000318"/>
    <property type="project" value="GO_Central"/>
</dbReference>
<dbReference type="GO" id="GO:0042803">
    <property type="term" value="F:protein homodimerization activity"/>
    <property type="evidence" value="ECO:0000250"/>
    <property type="project" value="UniProtKB"/>
</dbReference>
<dbReference type="GO" id="GO:0055090">
    <property type="term" value="P:acylglycerol homeostasis"/>
    <property type="evidence" value="ECO:0000318"/>
    <property type="project" value="GO_Central"/>
</dbReference>
<dbReference type="GO" id="GO:0030325">
    <property type="term" value="P:adrenal gland development"/>
    <property type="evidence" value="ECO:0007669"/>
    <property type="project" value="Ensembl"/>
</dbReference>
<dbReference type="GO" id="GO:0034205">
    <property type="term" value="P:amyloid-beta formation"/>
    <property type="evidence" value="ECO:0007669"/>
    <property type="project" value="Ensembl"/>
</dbReference>
<dbReference type="GO" id="GO:0043534">
    <property type="term" value="P:blood vessel endothelial cell migration"/>
    <property type="evidence" value="ECO:0007669"/>
    <property type="project" value="Ensembl"/>
</dbReference>
<dbReference type="GO" id="GO:0071402">
    <property type="term" value="P:cellular response to lipoprotein particle stimulus"/>
    <property type="evidence" value="ECO:0007669"/>
    <property type="project" value="Ensembl"/>
</dbReference>
<dbReference type="GO" id="GO:0006695">
    <property type="term" value="P:cholesterol biosynthetic process"/>
    <property type="evidence" value="ECO:0007669"/>
    <property type="project" value="Ensembl"/>
</dbReference>
<dbReference type="GO" id="GO:0033344">
    <property type="term" value="P:cholesterol efflux"/>
    <property type="evidence" value="ECO:0000318"/>
    <property type="project" value="GO_Central"/>
</dbReference>
<dbReference type="GO" id="GO:0042632">
    <property type="term" value="P:cholesterol homeostasis"/>
    <property type="evidence" value="ECO:0007669"/>
    <property type="project" value="Ensembl"/>
</dbReference>
<dbReference type="GO" id="GO:0070508">
    <property type="term" value="P:cholesterol import"/>
    <property type="evidence" value="ECO:0007669"/>
    <property type="project" value="Ensembl"/>
</dbReference>
<dbReference type="GO" id="GO:0008203">
    <property type="term" value="P:cholesterol metabolic process"/>
    <property type="evidence" value="ECO:0000318"/>
    <property type="project" value="GO_Central"/>
</dbReference>
<dbReference type="GO" id="GO:0001935">
    <property type="term" value="P:endothelial cell proliferation"/>
    <property type="evidence" value="ECO:0007669"/>
    <property type="project" value="Ensembl"/>
</dbReference>
<dbReference type="GO" id="GO:0007186">
    <property type="term" value="P:G protein-coupled receptor signaling pathway"/>
    <property type="evidence" value="ECO:0007669"/>
    <property type="project" value="Ensembl"/>
</dbReference>
<dbReference type="GO" id="GO:0008211">
    <property type="term" value="P:glucocorticoid metabolic process"/>
    <property type="evidence" value="ECO:0007669"/>
    <property type="project" value="Ensembl"/>
</dbReference>
<dbReference type="GO" id="GO:0034380">
    <property type="term" value="P:high-density lipoprotein particle assembly"/>
    <property type="evidence" value="ECO:0007669"/>
    <property type="project" value="Ensembl"/>
</dbReference>
<dbReference type="GO" id="GO:0034375">
    <property type="term" value="P:high-density lipoprotein particle remodeling"/>
    <property type="evidence" value="ECO:0007669"/>
    <property type="project" value="Ensembl"/>
</dbReference>
<dbReference type="GO" id="GO:0007229">
    <property type="term" value="P:integrin-mediated signaling pathway"/>
    <property type="evidence" value="ECO:0007669"/>
    <property type="project" value="Ensembl"/>
</dbReference>
<dbReference type="GO" id="GO:0019915">
    <property type="term" value="P:lipid storage"/>
    <property type="evidence" value="ECO:0007669"/>
    <property type="project" value="Ensembl"/>
</dbReference>
<dbReference type="GO" id="GO:0042158">
    <property type="term" value="P:lipoprotein biosynthetic process"/>
    <property type="evidence" value="ECO:0007669"/>
    <property type="project" value="Ensembl"/>
</dbReference>
<dbReference type="GO" id="GO:0060354">
    <property type="term" value="P:negative regulation of cell adhesion molecule production"/>
    <property type="evidence" value="ECO:0007669"/>
    <property type="project" value="Ensembl"/>
</dbReference>
<dbReference type="GO" id="GO:0002719">
    <property type="term" value="P:negative regulation of cytokine production involved in immune response"/>
    <property type="evidence" value="ECO:0007669"/>
    <property type="project" value="Ensembl"/>
</dbReference>
<dbReference type="GO" id="GO:0034115">
    <property type="term" value="P:negative regulation of heterotypic cell-cell adhesion"/>
    <property type="evidence" value="ECO:0007669"/>
    <property type="project" value="Ensembl"/>
</dbReference>
<dbReference type="GO" id="GO:0050728">
    <property type="term" value="P:negative regulation of inflammatory response"/>
    <property type="evidence" value="ECO:0007669"/>
    <property type="project" value="Ensembl"/>
</dbReference>
<dbReference type="GO" id="GO:0032691">
    <property type="term" value="P:negative regulation of interleukin-1 beta production"/>
    <property type="evidence" value="ECO:0007669"/>
    <property type="project" value="Ensembl"/>
</dbReference>
<dbReference type="GO" id="GO:0010804">
    <property type="term" value="P:negative regulation of tumor necrosis factor-mediated signaling pathway"/>
    <property type="evidence" value="ECO:0007669"/>
    <property type="project" value="Ensembl"/>
</dbReference>
<dbReference type="GO" id="GO:0010903">
    <property type="term" value="P:negative regulation of very-low-density lipoprotein particle remodeling"/>
    <property type="evidence" value="ECO:0007669"/>
    <property type="project" value="Ensembl"/>
</dbReference>
<dbReference type="GO" id="GO:0006656">
    <property type="term" value="P:phosphatidylcholine biosynthetic process"/>
    <property type="evidence" value="ECO:0007669"/>
    <property type="project" value="Ensembl"/>
</dbReference>
<dbReference type="GO" id="GO:0033700">
    <property type="term" value="P:phospholipid efflux"/>
    <property type="evidence" value="ECO:0000318"/>
    <property type="project" value="GO_Central"/>
</dbReference>
<dbReference type="GO" id="GO:0055091">
    <property type="term" value="P:phospholipid homeostasis"/>
    <property type="evidence" value="ECO:0007669"/>
    <property type="project" value="Ensembl"/>
</dbReference>
<dbReference type="GO" id="GO:0010875">
    <property type="term" value="P:positive regulation of cholesterol efflux"/>
    <property type="evidence" value="ECO:0000250"/>
    <property type="project" value="UniProtKB"/>
</dbReference>
<dbReference type="GO" id="GO:0090205">
    <property type="term" value="P:positive regulation of cholesterol metabolic process"/>
    <property type="evidence" value="ECO:0007669"/>
    <property type="project" value="Ensembl"/>
</dbReference>
<dbReference type="GO" id="GO:0050766">
    <property type="term" value="P:positive regulation of phagocytosis"/>
    <property type="evidence" value="ECO:0000250"/>
    <property type="project" value="UniProtKB"/>
</dbReference>
<dbReference type="GO" id="GO:1902995">
    <property type="term" value="P:positive regulation of phospholipid efflux"/>
    <property type="evidence" value="ECO:0000250"/>
    <property type="project" value="UniProtKB"/>
</dbReference>
<dbReference type="GO" id="GO:0035025">
    <property type="term" value="P:positive regulation of Rho protein signal transduction"/>
    <property type="evidence" value="ECO:0007669"/>
    <property type="project" value="Ensembl"/>
</dbReference>
<dbReference type="GO" id="GO:0051496">
    <property type="term" value="P:positive regulation of stress fiber assembly"/>
    <property type="evidence" value="ECO:0007669"/>
    <property type="project" value="Ensembl"/>
</dbReference>
<dbReference type="GO" id="GO:1900026">
    <property type="term" value="P:positive regulation of substrate adhesion-dependent cell spreading"/>
    <property type="evidence" value="ECO:0007669"/>
    <property type="project" value="Ensembl"/>
</dbReference>
<dbReference type="GO" id="GO:0050821">
    <property type="term" value="P:protein stabilization"/>
    <property type="evidence" value="ECO:0000250"/>
    <property type="project" value="UniProtKB"/>
</dbReference>
<dbReference type="GO" id="GO:0032489">
    <property type="term" value="P:regulation of Cdc42 protein signal transduction"/>
    <property type="evidence" value="ECO:0007669"/>
    <property type="project" value="Ensembl"/>
</dbReference>
<dbReference type="GO" id="GO:0030300">
    <property type="term" value="P:regulation of intestinal cholesterol absorption"/>
    <property type="evidence" value="ECO:0007669"/>
    <property type="project" value="Ensembl"/>
</dbReference>
<dbReference type="GO" id="GO:0043691">
    <property type="term" value="P:reverse cholesterol transport"/>
    <property type="evidence" value="ECO:0007669"/>
    <property type="project" value="Ensembl"/>
</dbReference>
<dbReference type="GO" id="GO:0070328">
    <property type="term" value="P:triglyceride homeostasis"/>
    <property type="evidence" value="ECO:0007669"/>
    <property type="project" value="Ensembl"/>
</dbReference>
<dbReference type="GO" id="GO:0051180">
    <property type="term" value="P:vitamin transport"/>
    <property type="evidence" value="ECO:0007669"/>
    <property type="project" value="Ensembl"/>
</dbReference>
<dbReference type="FunFam" id="1.20.120.20:FF:000001">
    <property type="entry name" value="Apolipoprotein A-I"/>
    <property type="match status" value="1"/>
</dbReference>
<dbReference type="FunFam" id="1.20.5.20:FF:000001">
    <property type="entry name" value="apolipoprotein A-I"/>
    <property type="match status" value="1"/>
</dbReference>
<dbReference type="Gene3D" id="1.20.5.20">
    <property type="match status" value="1"/>
</dbReference>
<dbReference type="Gene3D" id="6.10.140.380">
    <property type="match status" value="1"/>
</dbReference>
<dbReference type="Gene3D" id="1.20.120.20">
    <property type="entry name" value="Apolipoprotein"/>
    <property type="match status" value="1"/>
</dbReference>
<dbReference type="InterPro" id="IPR000074">
    <property type="entry name" value="ApoA_E"/>
</dbReference>
<dbReference type="InterPro" id="IPR050163">
    <property type="entry name" value="Apolipoprotein_A1/A4/E"/>
</dbReference>
<dbReference type="PANTHER" id="PTHR18976">
    <property type="entry name" value="APOLIPOPROTEIN"/>
    <property type="match status" value="1"/>
</dbReference>
<dbReference type="PANTHER" id="PTHR18976:SF11">
    <property type="entry name" value="APOLIPOPROTEIN A-I"/>
    <property type="match status" value="1"/>
</dbReference>
<dbReference type="Pfam" id="PF01442">
    <property type="entry name" value="Apolipoprotein"/>
    <property type="match status" value="1"/>
</dbReference>
<dbReference type="SUPFAM" id="SSF58113">
    <property type="entry name" value="Apolipoprotein A-I"/>
    <property type="match status" value="1"/>
</dbReference>
<protein>
    <recommendedName>
        <fullName>Apolipoprotein A-I</fullName>
        <shortName>Apo-AI</shortName>
        <shortName>ApoA-I</shortName>
    </recommendedName>
    <alternativeName>
        <fullName>Apolipoprotein A1</fullName>
    </alternativeName>
    <component>
        <recommendedName>
            <fullName>Proapolipoprotein A-I</fullName>
            <shortName>ProapoA-I</shortName>
        </recommendedName>
    </component>
    <component>
        <recommendedName>
            <fullName>Truncated apolipoprotein A-I</fullName>
        </recommendedName>
    </component>
</protein>
<gene>
    <name type="primary">APOA1</name>
</gene>
<keyword id="KW-0153">Cholesterol metabolism</keyword>
<keyword id="KW-0345">HDL</keyword>
<keyword id="KW-0443">Lipid metabolism</keyword>
<keyword id="KW-0445">Lipid transport</keyword>
<keyword id="KW-0449">Lipoprotein</keyword>
<keyword id="KW-0558">Oxidation</keyword>
<keyword id="KW-0564">Palmitate</keyword>
<keyword id="KW-0597">Phosphoprotein</keyword>
<keyword id="KW-1185">Reference proteome</keyword>
<keyword id="KW-0677">Repeat</keyword>
<keyword id="KW-0964">Secreted</keyword>
<keyword id="KW-0732">Signal</keyword>
<keyword id="KW-0753">Steroid metabolism</keyword>
<keyword id="KW-1207">Sterol metabolism</keyword>
<keyword id="KW-0813">Transport</keyword>
<comment type="function">
    <text evidence="3">Participates in the reverse transport of cholesterol from tissues to the liver for excretion by promoting cholesterol efflux from tissues and by acting as a cofactor for the lecithin cholesterol acyltransferase (LCAT). As part of the SPAP complex, activates spermatozoa motility.</text>
</comment>
<comment type="subunit">
    <text evidence="2 3 5">Homodimer (By similarity). Interacts with APOA1BP and CLU. Component of a sperm activating protein complex (SPAP), consisting of APOA1, an immunoglobulin heavy chain, an immunoglobulin light chain and albumin. Interacts with NDRG1. Interacts with SCGB3A2 (By similarity). Interacts with NAXE and YJEFN3 (By similarity).</text>
</comment>
<comment type="subcellular location">
    <subcellularLocation>
        <location evidence="3">Secreted</location>
    </subcellularLocation>
</comment>
<comment type="PTM">
    <text evidence="4">Glycosylated.</text>
</comment>
<comment type="PTM">
    <text evidence="4">Palmitoylated.</text>
</comment>
<comment type="PTM">
    <text evidence="1">Phosphorylation sites are present in the extracellular medium.</text>
</comment>
<comment type="similarity">
    <text evidence="7">Belongs to the apolipoprotein A1/A4/E family.</text>
</comment>
<proteinExistence type="inferred from homology"/>
<sequence>MKATVLTLAVLFLTGSQARHFWQQDEPPQTPWDRVKDLVTVYVEALKDSGKDYVSQFEGSALGKQLNLKLLDNWDSVTSTVSKLREQLGPVTQEFWDNLEKETEGLRQEMSKDLEEVKAKVQPYLDDFQKKWQEEMELYRQKVEPLRAELHEGTRQKLHELHEKLSPLGEEVRDRARAHVDALRTHLAPYSDELRQRLAARLEALKENGGARLAEYHAKASEHLSTLSEKAKPALEDLRQGLLPVLESFKVSFLSALEEYTKKLSTQ</sequence>
<accession>F7FQM7</accession>
<evidence type="ECO:0000250" key="1"/>
<evidence type="ECO:0000250" key="2">
    <source>
        <dbReference type="UniProtKB" id="G5BQH5"/>
    </source>
</evidence>
<evidence type="ECO:0000250" key="3">
    <source>
        <dbReference type="UniProtKB" id="P02647"/>
    </source>
</evidence>
<evidence type="ECO:0000250" key="4">
    <source>
        <dbReference type="UniProtKB" id="P02648"/>
    </source>
</evidence>
<evidence type="ECO:0000250" key="5">
    <source>
        <dbReference type="UniProtKB" id="P04639"/>
    </source>
</evidence>
<evidence type="ECO:0000255" key="6"/>
<evidence type="ECO:0000305" key="7"/>
<organism>
    <name type="scientific">Macaca mulatta</name>
    <name type="common">Rhesus macaque</name>
    <dbReference type="NCBI Taxonomy" id="9544"/>
    <lineage>
        <taxon>Eukaryota</taxon>
        <taxon>Metazoa</taxon>
        <taxon>Chordata</taxon>
        <taxon>Craniata</taxon>
        <taxon>Vertebrata</taxon>
        <taxon>Euteleostomi</taxon>
        <taxon>Mammalia</taxon>
        <taxon>Eutheria</taxon>
        <taxon>Euarchontoglires</taxon>
        <taxon>Primates</taxon>
        <taxon>Haplorrhini</taxon>
        <taxon>Catarrhini</taxon>
        <taxon>Cercopithecidae</taxon>
        <taxon>Cercopithecinae</taxon>
        <taxon>Macaca</taxon>
    </lineage>
</organism>
<name>APOA1_MACMU</name>